<gene>
    <name evidence="1" type="primary">ku</name>
    <name type="ordered locus">SAV_879</name>
</gene>
<organism>
    <name type="scientific">Streptomyces avermitilis (strain ATCC 31267 / DSM 46492 / JCM 5070 / NBRC 14893 / NCIMB 12804 / NRRL 8165 / MA-4680)</name>
    <dbReference type="NCBI Taxonomy" id="227882"/>
    <lineage>
        <taxon>Bacteria</taxon>
        <taxon>Bacillati</taxon>
        <taxon>Actinomycetota</taxon>
        <taxon>Actinomycetes</taxon>
        <taxon>Kitasatosporales</taxon>
        <taxon>Streptomycetaceae</taxon>
        <taxon>Streptomyces</taxon>
    </lineage>
</organism>
<feature type="chain" id="PRO_0000389199" description="Non-homologous end joining protein Ku">
    <location>
        <begin position="1"/>
        <end position="319"/>
    </location>
</feature>
<feature type="domain" description="Ku" evidence="1">
    <location>
        <begin position="10"/>
        <end position="188"/>
    </location>
</feature>
<feature type="region of interest" description="Disordered" evidence="2">
    <location>
        <begin position="252"/>
        <end position="319"/>
    </location>
</feature>
<feature type="compositionally biased region" description="Basic and acidic residues" evidence="2">
    <location>
        <begin position="260"/>
        <end position="274"/>
    </location>
</feature>
<feature type="compositionally biased region" description="Basic residues" evidence="2">
    <location>
        <begin position="305"/>
        <end position="319"/>
    </location>
</feature>
<reference key="1">
    <citation type="journal article" date="2003" name="Nat. Biotechnol.">
        <title>Complete genome sequence and comparative analysis of the industrial microorganism Streptomyces avermitilis.</title>
        <authorList>
            <person name="Ikeda H."/>
            <person name="Ishikawa J."/>
            <person name="Hanamoto A."/>
            <person name="Shinose M."/>
            <person name="Kikuchi H."/>
            <person name="Shiba T."/>
            <person name="Sakaki Y."/>
            <person name="Hattori M."/>
            <person name="Omura S."/>
        </authorList>
    </citation>
    <scope>NUCLEOTIDE SEQUENCE [LARGE SCALE GENOMIC DNA]</scope>
    <source>
        <strain>ATCC 31267 / DSM 46492 / JCM 5070 / NBRC 14893 / NCIMB 12804 / NRRL 8165 / MA-4680</strain>
    </source>
</reference>
<reference key="2">
    <citation type="journal article" date="2001" name="Proc. Natl. Acad. Sci. U.S.A.">
        <title>Genome sequence of an industrial microorganism Streptomyces avermitilis: deducing the ability of producing secondary metabolites.</title>
        <authorList>
            <person name="Omura S."/>
            <person name="Ikeda H."/>
            <person name="Ishikawa J."/>
            <person name="Hanamoto A."/>
            <person name="Takahashi C."/>
            <person name="Shinose M."/>
            <person name="Takahashi Y."/>
            <person name="Horikawa H."/>
            <person name="Nakazawa H."/>
            <person name="Osonoe T."/>
            <person name="Kikuchi H."/>
            <person name="Shiba T."/>
            <person name="Sakaki Y."/>
            <person name="Hattori M."/>
        </authorList>
    </citation>
    <scope>NUCLEOTIDE SEQUENCE [LARGE SCALE GENOMIC DNA]</scope>
    <source>
        <strain>ATCC 31267 / DSM 46492 / JCM 5070 / NBRC 14893 / NCIMB 12804 / NRRL 8165 / MA-4680</strain>
    </source>
</reference>
<proteinExistence type="inferred from homology"/>
<accession>Q82PM3</accession>
<evidence type="ECO:0000255" key="1">
    <source>
        <dbReference type="HAMAP-Rule" id="MF_01875"/>
    </source>
</evidence>
<evidence type="ECO:0000256" key="2">
    <source>
        <dbReference type="SAM" id="MobiDB-lite"/>
    </source>
</evidence>
<sequence length="319" mass="35798">MPRTIWSGAISFGLVTVPIHVVSATEDHSVRFHQYHLEDMGRVRVRKYCELEDREVTQDEIGKGYELSKDTVIPVLDEELRELPLPTAKAIEIEAFVPLASIDPMGIGEGYYLQPDGQVAAKPYKLLRQALERSSKVAVAKYAWSGRERLGMLRVREEAIVLHAMRWPDEIRDPSELAPQGIELSEDEITEAEQLIDRLTRDDLEGEEFQDHYTEALHEVIEAKQEGHAPPEARETEEEPGKVLDLMAALRQSVAKAKASRGESGEADVHELPRKKTAARKTAKQQPAKKTSAKRTAAKEPTKKTAAKKTTPKKPRRSA</sequence>
<name>KU_STRAW</name>
<keyword id="KW-0227">DNA damage</keyword>
<keyword id="KW-0233">DNA recombination</keyword>
<keyword id="KW-0234">DNA repair</keyword>
<keyword id="KW-0238">DNA-binding</keyword>
<keyword id="KW-1185">Reference proteome</keyword>
<dbReference type="EMBL" id="BA000030">
    <property type="protein sequence ID" value="BAC68589.1"/>
    <property type="molecule type" value="Genomic_DNA"/>
</dbReference>
<dbReference type="RefSeq" id="WP_010982317.1">
    <property type="nucleotide sequence ID" value="NZ_JZJK01000088.1"/>
</dbReference>
<dbReference type="SMR" id="Q82PM3"/>
<dbReference type="GeneID" id="41537993"/>
<dbReference type="KEGG" id="sma:SAVERM_879"/>
<dbReference type="eggNOG" id="COG1273">
    <property type="taxonomic scope" value="Bacteria"/>
</dbReference>
<dbReference type="HOGENOM" id="CLU_048975_1_2_11"/>
<dbReference type="OrthoDB" id="9795084at2"/>
<dbReference type="Proteomes" id="UP000000428">
    <property type="component" value="Chromosome"/>
</dbReference>
<dbReference type="GO" id="GO:0003690">
    <property type="term" value="F:double-stranded DNA binding"/>
    <property type="evidence" value="ECO:0007669"/>
    <property type="project" value="UniProtKB-UniRule"/>
</dbReference>
<dbReference type="GO" id="GO:0006310">
    <property type="term" value="P:DNA recombination"/>
    <property type="evidence" value="ECO:0007669"/>
    <property type="project" value="UniProtKB-KW"/>
</dbReference>
<dbReference type="GO" id="GO:0006303">
    <property type="term" value="P:double-strand break repair via nonhomologous end joining"/>
    <property type="evidence" value="ECO:0007669"/>
    <property type="project" value="UniProtKB-UniRule"/>
</dbReference>
<dbReference type="CDD" id="cd00789">
    <property type="entry name" value="KU_like"/>
    <property type="match status" value="1"/>
</dbReference>
<dbReference type="FunFam" id="2.40.290.10:FF:000004">
    <property type="entry name" value="Non-homologous end joining protein Ku"/>
    <property type="match status" value="1"/>
</dbReference>
<dbReference type="Gene3D" id="2.40.290.10">
    <property type="match status" value="1"/>
</dbReference>
<dbReference type="HAMAP" id="MF_01875">
    <property type="entry name" value="Prokaryotic_Ku"/>
    <property type="match status" value="1"/>
</dbReference>
<dbReference type="InterPro" id="IPR006164">
    <property type="entry name" value="Ku70/Ku80_beta-barrel_dom"/>
</dbReference>
<dbReference type="InterPro" id="IPR009187">
    <property type="entry name" value="Prok_Ku"/>
</dbReference>
<dbReference type="InterPro" id="IPR016194">
    <property type="entry name" value="SPOC-like_C_dom_sf"/>
</dbReference>
<dbReference type="NCBIfam" id="TIGR02772">
    <property type="entry name" value="Ku_bact"/>
    <property type="match status" value="1"/>
</dbReference>
<dbReference type="PANTHER" id="PTHR41251">
    <property type="entry name" value="NON-HOMOLOGOUS END JOINING PROTEIN KU"/>
    <property type="match status" value="1"/>
</dbReference>
<dbReference type="PANTHER" id="PTHR41251:SF1">
    <property type="entry name" value="NON-HOMOLOGOUS END JOINING PROTEIN KU"/>
    <property type="match status" value="1"/>
</dbReference>
<dbReference type="Pfam" id="PF02735">
    <property type="entry name" value="Ku"/>
    <property type="match status" value="1"/>
</dbReference>
<dbReference type="PIRSF" id="PIRSF006493">
    <property type="entry name" value="Prok_Ku"/>
    <property type="match status" value="1"/>
</dbReference>
<dbReference type="SMART" id="SM00559">
    <property type="entry name" value="Ku78"/>
    <property type="match status" value="1"/>
</dbReference>
<dbReference type="SUPFAM" id="SSF100939">
    <property type="entry name" value="SPOC domain-like"/>
    <property type="match status" value="1"/>
</dbReference>
<comment type="function">
    <text evidence="1">With LigD forms a non-homologous end joining (NHEJ) DNA repair enzyme, which repairs dsDNA breaks with reduced fidelity. Binds linear dsDNA with 5'- and 3'- overhangs but not closed circular dsDNA nor ssDNA. Recruits and stimulates the ligase activity of LigD.</text>
</comment>
<comment type="subunit">
    <text evidence="1">Homodimer. Interacts with LigD.</text>
</comment>
<comment type="similarity">
    <text evidence="1">Belongs to the prokaryotic Ku family.</text>
</comment>
<protein>
    <recommendedName>
        <fullName evidence="1">Non-homologous end joining protein Ku</fullName>
    </recommendedName>
</protein>